<evidence type="ECO:0000255" key="1">
    <source>
        <dbReference type="HAMAP-Rule" id="MF_01369"/>
    </source>
</evidence>
<evidence type="ECO:0000305" key="2"/>
<sequence>MSKLFESRLADVIRKPVITEKATNALDLNQYTFEVDHRAAKPQIKAAIEALFNVKVIGINTMNPPRRTRRVGKFSGKRSQVKKAIVRLAEGDKIQLFPES</sequence>
<protein>
    <recommendedName>
        <fullName evidence="1">Large ribosomal subunit protein uL23</fullName>
    </recommendedName>
    <alternativeName>
        <fullName evidence="2">50S ribosomal protein L23</fullName>
    </alternativeName>
</protein>
<gene>
    <name evidence="1" type="primary">rplW</name>
    <name evidence="1" type="synonym">rpl23</name>
    <name type="ordered locus">P9515_17381</name>
</gene>
<name>RL23_PROM5</name>
<comment type="function">
    <text evidence="1">One of the early assembly proteins it binds 23S rRNA. One of the proteins that surrounds the polypeptide exit tunnel on the outside of the ribosome. Forms the main docking site for trigger factor binding to the ribosome.</text>
</comment>
<comment type="subunit">
    <text evidence="1">Part of the 50S ribosomal subunit. Contacts protein L29, and trigger factor when it is bound to the ribosome.</text>
</comment>
<comment type="similarity">
    <text evidence="1">Belongs to the universal ribosomal protein uL23 family.</text>
</comment>
<proteinExistence type="inferred from homology"/>
<organism>
    <name type="scientific">Prochlorococcus marinus (strain MIT 9515)</name>
    <dbReference type="NCBI Taxonomy" id="167542"/>
    <lineage>
        <taxon>Bacteria</taxon>
        <taxon>Bacillati</taxon>
        <taxon>Cyanobacteriota</taxon>
        <taxon>Cyanophyceae</taxon>
        <taxon>Synechococcales</taxon>
        <taxon>Prochlorococcaceae</taxon>
        <taxon>Prochlorococcus</taxon>
    </lineage>
</organism>
<dbReference type="EMBL" id="CP000552">
    <property type="protein sequence ID" value="ABM72945.1"/>
    <property type="molecule type" value="Genomic_DNA"/>
</dbReference>
<dbReference type="RefSeq" id="WP_011821035.1">
    <property type="nucleotide sequence ID" value="NC_008817.1"/>
</dbReference>
<dbReference type="SMR" id="A2BYT4"/>
<dbReference type="STRING" id="167542.P9515_17381"/>
<dbReference type="GeneID" id="60201052"/>
<dbReference type="KEGG" id="pmc:P9515_17381"/>
<dbReference type="eggNOG" id="COG0089">
    <property type="taxonomic scope" value="Bacteria"/>
</dbReference>
<dbReference type="HOGENOM" id="CLU_037562_3_2_3"/>
<dbReference type="OrthoDB" id="9793353at2"/>
<dbReference type="Proteomes" id="UP000001589">
    <property type="component" value="Chromosome"/>
</dbReference>
<dbReference type="GO" id="GO:1990904">
    <property type="term" value="C:ribonucleoprotein complex"/>
    <property type="evidence" value="ECO:0007669"/>
    <property type="project" value="UniProtKB-KW"/>
</dbReference>
<dbReference type="GO" id="GO:0005840">
    <property type="term" value="C:ribosome"/>
    <property type="evidence" value="ECO:0007669"/>
    <property type="project" value="UniProtKB-KW"/>
</dbReference>
<dbReference type="GO" id="GO:0019843">
    <property type="term" value="F:rRNA binding"/>
    <property type="evidence" value="ECO:0007669"/>
    <property type="project" value="UniProtKB-UniRule"/>
</dbReference>
<dbReference type="GO" id="GO:0003735">
    <property type="term" value="F:structural constituent of ribosome"/>
    <property type="evidence" value="ECO:0007669"/>
    <property type="project" value="InterPro"/>
</dbReference>
<dbReference type="GO" id="GO:0006412">
    <property type="term" value="P:translation"/>
    <property type="evidence" value="ECO:0007669"/>
    <property type="project" value="UniProtKB-UniRule"/>
</dbReference>
<dbReference type="FunFam" id="3.30.70.330:FF:000001">
    <property type="entry name" value="50S ribosomal protein L23"/>
    <property type="match status" value="1"/>
</dbReference>
<dbReference type="Gene3D" id="3.30.70.330">
    <property type="match status" value="1"/>
</dbReference>
<dbReference type="HAMAP" id="MF_01369_B">
    <property type="entry name" value="Ribosomal_uL23_B"/>
    <property type="match status" value="1"/>
</dbReference>
<dbReference type="InterPro" id="IPR012677">
    <property type="entry name" value="Nucleotide-bd_a/b_plait_sf"/>
</dbReference>
<dbReference type="InterPro" id="IPR013025">
    <property type="entry name" value="Ribosomal_uL23-like"/>
</dbReference>
<dbReference type="InterPro" id="IPR012678">
    <property type="entry name" value="Ribosomal_uL23/eL15/eS24_sf"/>
</dbReference>
<dbReference type="InterPro" id="IPR001014">
    <property type="entry name" value="Ribosomal_uL23_CS"/>
</dbReference>
<dbReference type="NCBIfam" id="NF004363">
    <property type="entry name" value="PRK05738.2-4"/>
    <property type="match status" value="1"/>
</dbReference>
<dbReference type="NCBIfam" id="NF004365">
    <property type="entry name" value="PRK05738.3-1"/>
    <property type="match status" value="1"/>
</dbReference>
<dbReference type="NCBIfam" id="NF004366">
    <property type="entry name" value="PRK05738.3-2"/>
    <property type="match status" value="1"/>
</dbReference>
<dbReference type="NCBIfam" id="NF004368">
    <property type="entry name" value="PRK05738.3-4"/>
    <property type="match status" value="1"/>
</dbReference>
<dbReference type="PANTHER" id="PTHR11620">
    <property type="entry name" value="60S RIBOSOMAL PROTEIN L23A"/>
    <property type="match status" value="1"/>
</dbReference>
<dbReference type="Pfam" id="PF00276">
    <property type="entry name" value="Ribosomal_L23"/>
    <property type="match status" value="1"/>
</dbReference>
<dbReference type="SUPFAM" id="SSF54189">
    <property type="entry name" value="Ribosomal proteins S24e, L23 and L15e"/>
    <property type="match status" value="1"/>
</dbReference>
<dbReference type="PROSITE" id="PS00050">
    <property type="entry name" value="RIBOSOMAL_L23"/>
    <property type="match status" value="1"/>
</dbReference>
<accession>A2BYT4</accession>
<keyword id="KW-0687">Ribonucleoprotein</keyword>
<keyword id="KW-0689">Ribosomal protein</keyword>
<keyword id="KW-0694">RNA-binding</keyword>
<keyword id="KW-0699">rRNA-binding</keyword>
<feature type="chain" id="PRO_1000068136" description="Large ribosomal subunit protein uL23">
    <location>
        <begin position="1"/>
        <end position="100"/>
    </location>
</feature>
<reference key="1">
    <citation type="journal article" date="2007" name="PLoS Genet.">
        <title>Patterns and implications of gene gain and loss in the evolution of Prochlorococcus.</title>
        <authorList>
            <person name="Kettler G.C."/>
            <person name="Martiny A.C."/>
            <person name="Huang K."/>
            <person name="Zucker J."/>
            <person name="Coleman M.L."/>
            <person name="Rodrigue S."/>
            <person name="Chen F."/>
            <person name="Lapidus A."/>
            <person name="Ferriera S."/>
            <person name="Johnson J."/>
            <person name="Steglich C."/>
            <person name="Church G.M."/>
            <person name="Richardson P."/>
            <person name="Chisholm S.W."/>
        </authorList>
    </citation>
    <scope>NUCLEOTIDE SEQUENCE [LARGE SCALE GENOMIC DNA]</scope>
    <source>
        <strain>MIT 9515</strain>
    </source>
</reference>